<keyword id="KW-0007">Acetylation</keyword>
<keyword id="KW-0113">Calvin cycle</keyword>
<keyword id="KW-0120">Carbon dioxide fixation</keyword>
<keyword id="KW-0150">Chloroplast</keyword>
<keyword id="KW-1015">Disulfide bond</keyword>
<keyword id="KW-0456">Lyase</keyword>
<keyword id="KW-0460">Magnesium</keyword>
<keyword id="KW-0479">Metal-binding</keyword>
<keyword id="KW-0488">Methylation</keyword>
<keyword id="KW-0503">Monooxygenase</keyword>
<keyword id="KW-0560">Oxidoreductase</keyword>
<keyword id="KW-0601">Photorespiration</keyword>
<keyword id="KW-0602">Photosynthesis</keyword>
<keyword id="KW-0934">Plastid</keyword>
<gene>
    <name evidence="1" type="primary">rbcL</name>
</gene>
<feature type="initiator methionine" description="Removed" evidence="1">
    <location>
        <position position="1"/>
    </location>
</feature>
<feature type="chain" id="PRO_0000251426" description="Ribulose bisphosphate carboxylase large chain">
    <location>
        <begin position="2"/>
        <end position="474"/>
    </location>
</feature>
<feature type="active site" description="Proton acceptor" evidence="1">
    <location>
        <position position="174"/>
    </location>
</feature>
<feature type="active site" description="Proton acceptor" evidence="1">
    <location>
        <position position="293"/>
    </location>
</feature>
<feature type="binding site" description="in homodimeric partner" evidence="1">
    <location>
        <position position="122"/>
    </location>
    <ligand>
        <name>substrate</name>
    </ligand>
</feature>
<feature type="binding site" evidence="1">
    <location>
        <position position="172"/>
    </location>
    <ligand>
        <name>substrate</name>
    </ligand>
</feature>
<feature type="binding site" evidence="1">
    <location>
        <position position="176"/>
    </location>
    <ligand>
        <name>substrate</name>
    </ligand>
</feature>
<feature type="binding site" description="via carbamate group" evidence="1">
    <location>
        <position position="200"/>
    </location>
    <ligand>
        <name>Mg(2+)</name>
        <dbReference type="ChEBI" id="CHEBI:18420"/>
    </ligand>
</feature>
<feature type="binding site" evidence="1">
    <location>
        <position position="202"/>
    </location>
    <ligand>
        <name>Mg(2+)</name>
        <dbReference type="ChEBI" id="CHEBI:18420"/>
    </ligand>
</feature>
<feature type="binding site" evidence="1">
    <location>
        <position position="203"/>
    </location>
    <ligand>
        <name>Mg(2+)</name>
        <dbReference type="ChEBI" id="CHEBI:18420"/>
    </ligand>
</feature>
<feature type="binding site" evidence="1">
    <location>
        <position position="294"/>
    </location>
    <ligand>
        <name>substrate</name>
    </ligand>
</feature>
<feature type="binding site" evidence="1">
    <location>
        <position position="326"/>
    </location>
    <ligand>
        <name>substrate</name>
    </ligand>
</feature>
<feature type="binding site" evidence="1">
    <location>
        <position position="378"/>
    </location>
    <ligand>
        <name>substrate</name>
    </ligand>
</feature>
<feature type="site" description="Transition state stabilizer" evidence="1">
    <location>
        <position position="333"/>
    </location>
</feature>
<feature type="modified residue" description="N-acetylproline" evidence="1">
    <location>
        <position position="2"/>
    </location>
</feature>
<feature type="modified residue" description="N6,N6,N6-trimethyllysine" evidence="1">
    <location>
        <position position="13"/>
    </location>
</feature>
<feature type="modified residue" description="N6-carboxylysine" evidence="1">
    <location>
        <position position="200"/>
    </location>
</feature>
<feature type="disulfide bond" description="Interchain; in linked form" evidence="1">
    <location>
        <position position="246"/>
    </location>
</feature>
<sequence>MPTTETKTGAGFKAGVKDYRLTYYTPDYQVKETDILAAFRMTPQPGVPPEECGAAVAAESSTGTWTTVWTDGLTSLDRYKGRCYDLEPVPGEENQYIAYIAYPIDLFEEGSVTNLFTSIVGNVFGFKALRALRLEDLRIPPAYVKTFQGPPHGIQAERDRLNKYGRGLLGCTIKPKLGLSAKNYGRAVYECLRGGLDFTKDDENVNSQPFMRWRDRFLFVSEAIYKAQAETGEIKGHYLNATAPDCEEMYKRAECAKDFGVPIIMHDYLTGGFTANTSLATYCRDNGLLLHIHRAMHAVIDRQRNHGIHFRVLAKALRLSGGDHLHSGTVVGKLEGEREVTLGFVDLMRDDYIEKDRSRGIYFTQDWCSLPGTMPVASGGIHVWHMPALVEIFGDDACLQFGGGTLGHPWGNAPGAAANRVALEACTQARNEGRDLAREGGDVIRQACQWSPELAAACEVWKEIKFEFETIDTL</sequence>
<accession>Q20EX7</accession>
<name>RBL_OLTVI</name>
<protein>
    <recommendedName>
        <fullName evidence="1">Ribulose bisphosphate carboxylase large chain</fullName>
        <shortName evidence="1">RuBisCO large subunit</shortName>
        <ecNumber evidence="1">4.1.1.39</ecNumber>
    </recommendedName>
</protein>
<evidence type="ECO:0000255" key="1">
    <source>
        <dbReference type="HAMAP-Rule" id="MF_01338"/>
    </source>
</evidence>
<evidence type="ECO:0000305" key="2"/>
<geneLocation type="chloroplast"/>
<reference key="1">
    <citation type="journal article" date="2006" name="BMC Biol.">
        <title>The complete chloroplast DNA sequence of the green alga Oltmannsiellopsis viridis reveals a distinctive quadripartite architecture in the chloroplast genome of early diverging ulvophytes.</title>
        <authorList>
            <person name="Pombert J.-F."/>
            <person name="Lemieux C."/>
            <person name="Turmel M."/>
        </authorList>
    </citation>
    <scope>NUCLEOTIDE SEQUENCE [LARGE SCALE GENOMIC DNA]</scope>
</reference>
<proteinExistence type="inferred from homology"/>
<comment type="function">
    <text evidence="1">RuBisCO catalyzes two reactions: the carboxylation of D-ribulose 1,5-bisphosphate, the primary event in carbon dioxide fixation, as well as the oxidative fragmentation of the pentose substrate in the photorespiration process. Both reactions occur simultaneously and in competition at the same active site.</text>
</comment>
<comment type="catalytic activity">
    <reaction evidence="1">
        <text>2 (2R)-3-phosphoglycerate + 2 H(+) = D-ribulose 1,5-bisphosphate + CO2 + H2O</text>
        <dbReference type="Rhea" id="RHEA:23124"/>
        <dbReference type="ChEBI" id="CHEBI:15377"/>
        <dbReference type="ChEBI" id="CHEBI:15378"/>
        <dbReference type="ChEBI" id="CHEBI:16526"/>
        <dbReference type="ChEBI" id="CHEBI:57870"/>
        <dbReference type="ChEBI" id="CHEBI:58272"/>
        <dbReference type="EC" id="4.1.1.39"/>
    </reaction>
</comment>
<comment type="catalytic activity">
    <reaction evidence="1">
        <text>D-ribulose 1,5-bisphosphate + O2 = 2-phosphoglycolate + (2R)-3-phosphoglycerate + 2 H(+)</text>
        <dbReference type="Rhea" id="RHEA:36631"/>
        <dbReference type="ChEBI" id="CHEBI:15378"/>
        <dbReference type="ChEBI" id="CHEBI:15379"/>
        <dbReference type="ChEBI" id="CHEBI:57870"/>
        <dbReference type="ChEBI" id="CHEBI:58033"/>
        <dbReference type="ChEBI" id="CHEBI:58272"/>
    </reaction>
</comment>
<comment type="cofactor">
    <cofactor evidence="1">
        <name>Mg(2+)</name>
        <dbReference type="ChEBI" id="CHEBI:18420"/>
    </cofactor>
    <text evidence="1">Binds 1 Mg(2+) ion per subunit.</text>
</comment>
<comment type="subunit">
    <text evidence="1">Heterohexadecamer of 8 large chains and 8 small chains; disulfide-linked. The disulfide link is formed within the large subunit homodimers.</text>
</comment>
<comment type="subcellular location">
    <subcellularLocation>
        <location>Plastid</location>
        <location>Chloroplast</location>
    </subcellularLocation>
</comment>
<comment type="PTM">
    <text evidence="1">The disulfide bond which can form in the large chain dimeric partners within the hexadecamer appears to be associated with oxidative stress and protein turnover.</text>
</comment>
<comment type="miscellaneous">
    <text evidence="1">The basic functional RuBisCO is composed of a large chain homodimer in a 'head-to-tail' conformation. In form I RuBisCO this homodimer is arranged in a barrel-like tetramer with the small subunits forming a tetrameric 'cap' on each end of the 'barrel'.</text>
</comment>
<comment type="similarity">
    <text evidence="1">Belongs to the RuBisCO large chain family. Type I subfamily.</text>
</comment>
<comment type="sequence caution" evidence="2">
    <conflict type="erroneous initiation">
        <sequence resource="EMBL-CDS" id="ABB81936"/>
    </conflict>
</comment>
<organism>
    <name type="scientific">Oltmannsiellopsis viridis</name>
    <name type="common">Marine flagellate</name>
    <name type="synonym">Oltmannsiella viridis</name>
    <dbReference type="NCBI Taxonomy" id="51324"/>
    <lineage>
        <taxon>Eukaryota</taxon>
        <taxon>Viridiplantae</taxon>
        <taxon>Chlorophyta</taxon>
        <taxon>Ulvophyceae</taxon>
        <taxon>Oltmannsiellopsidales</taxon>
        <taxon>Oltmannsiellopsidaceae</taxon>
        <taxon>Oltmannsiellopsis</taxon>
    </lineage>
</organism>
<dbReference type="EC" id="4.1.1.39" evidence="1"/>
<dbReference type="EMBL" id="DQ291132">
    <property type="protein sequence ID" value="ABB81936.1"/>
    <property type="status" value="ALT_INIT"/>
    <property type="molecule type" value="Genomic_DNA"/>
</dbReference>
<dbReference type="RefSeq" id="YP_635868.1">
    <property type="nucleotide sequence ID" value="NC_008099.1"/>
</dbReference>
<dbReference type="SMR" id="Q20EX7"/>
<dbReference type="GeneID" id="4100153"/>
<dbReference type="GO" id="GO:0009507">
    <property type="term" value="C:chloroplast"/>
    <property type="evidence" value="ECO:0007669"/>
    <property type="project" value="UniProtKB-SubCell"/>
</dbReference>
<dbReference type="GO" id="GO:0000287">
    <property type="term" value="F:magnesium ion binding"/>
    <property type="evidence" value="ECO:0007669"/>
    <property type="project" value="UniProtKB-UniRule"/>
</dbReference>
<dbReference type="GO" id="GO:0004497">
    <property type="term" value="F:monooxygenase activity"/>
    <property type="evidence" value="ECO:0007669"/>
    <property type="project" value="UniProtKB-KW"/>
</dbReference>
<dbReference type="GO" id="GO:0016984">
    <property type="term" value="F:ribulose-bisphosphate carboxylase activity"/>
    <property type="evidence" value="ECO:0007669"/>
    <property type="project" value="UniProtKB-UniRule"/>
</dbReference>
<dbReference type="GO" id="GO:0009853">
    <property type="term" value="P:photorespiration"/>
    <property type="evidence" value="ECO:0007669"/>
    <property type="project" value="UniProtKB-KW"/>
</dbReference>
<dbReference type="GO" id="GO:0019253">
    <property type="term" value="P:reductive pentose-phosphate cycle"/>
    <property type="evidence" value="ECO:0007669"/>
    <property type="project" value="UniProtKB-UniRule"/>
</dbReference>
<dbReference type="CDD" id="cd08212">
    <property type="entry name" value="RuBisCO_large_I"/>
    <property type="match status" value="1"/>
</dbReference>
<dbReference type="FunFam" id="3.30.70.150:FF:000001">
    <property type="entry name" value="Ribulose bisphosphate carboxylase large chain"/>
    <property type="match status" value="1"/>
</dbReference>
<dbReference type="Gene3D" id="3.20.20.110">
    <property type="entry name" value="Ribulose bisphosphate carboxylase, large subunit, C-terminal domain"/>
    <property type="match status" value="1"/>
</dbReference>
<dbReference type="Gene3D" id="3.30.70.150">
    <property type="entry name" value="RuBisCO large subunit, N-terminal domain"/>
    <property type="match status" value="1"/>
</dbReference>
<dbReference type="HAMAP" id="MF_01338">
    <property type="entry name" value="RuBisCO_L_type1"/>
    <property type="match status" value="1"/>
</dbReference>
<dbReference type="InterPro" id="IPR033966">
    <property type="entry name" value="RuBisCO"/>
</dbReference>
<dbReference type="InterPro" id="IPR020878">
    <property type="entry name" value="RuBisCo_large_chain_AS"/>
</dbReference>
<dbReference type="InterPro" id="IPR000685">
    <property type="entry name" value="RuBisCO_lsu_C"/>
</dbReference>
<dbReference type="InterPro" id="IPR036376">
    <property type="entry name" value="RuBisCO_lsu_C_sf"/>
</dbReference>
<dbReference type="InterPro" id="IPR017443">
    <property type="entry name" value="RuBisCO_lsu_fd_N"/>
</dbReference>
<dbReference type="InterPro" id="IPR036422">
    <property type="entry name" value="RuBisCO_lsu_N_sf"/>
</dbReference>
<dbReference type="InterPro" id="IPR020888">
    <property type="entry name" value="RuBisCO_lsuI"/>
</dbReference>
<dbReference type="NCBIfam" id="NF003252">
    <property type="entry name" value="PRK04208.1"/>
    <property type="match status" value="1"/>
</dbReference>
<dbReference type="PANTHER" id="PTHR42704">
    <property type="entry name" value="RIBULOSE BISPHOSPHATE CARBOXYLASE"/>
    <property type="match status" value="1"/>
</dbReference>
<dbReference type="PANTHER" id="PTHR42704:SF17">
    <property type="entry name" value="RIBULOSE BISPHOSPHATE CARBOXYLASE LARGE CHAIN"/>
    <property type="match status" value="1"/>
</dbReference>
<dbReference type="Pfam" id="PF00016">
    <property type="entry name" value="RuBisCO_large"/>
    <property type="match status" value="1"/>
</dbReference>
<dbReference type="Pfam" id="PF02788">
    <property type="entry name" value="RuBisCO_large_N"/>
    <property type="match status" value="1"/>
</dbReference>
<dbReference type="SFLD" id="SFLDG01052">
    <property type="entry name" value="RuBisCO"/>
    <property type="match status" value="1"/>
</dbReference>
<dbReference type="SFLD" id="SFLDS00014">
    <property type="entry name" value="RuBisCO"/>
    <property type="match status" value="1"/>
</dbReference>
<dbReference type="SFLD" id="SFLDG00301">
    <property type="entry name" value="RuBisCO-like_proteins"/>
    <property type="match status" value="1"/>
</dbReference>
<dbReference type="SUPFAM" id="SSF51649">
    <property type="entry name" value="RuBisCo, C-terminal domain"/>
    <property type="match status" value="1"/>
</dbReference>
<dbReference type="SUPFAM" id="SSF54966">
    <property type="entry name" value="RuBisCO, large subunit, small (N-terminal) domain"/>
    <property type="match status" value="1"/>
</dbReference>
<dbReference type="PROSITE" id="PS00157">
    <property type="entry name" value="RUBISCO_LARGE"/>
    <property type="match status" value="1"/>
</dbReference>